<sequence length="218" mass="23411">MVTKSKRPKSGDRSGREPGNAGPIEQGDYLDGQLLIAMPVMEDERFARSVIYICAHSSEGAMGIIVNRPAGSIDFPELLVQLDIVEKPEQIKLPDHAESMKVLRGGPVETGRGFVLHSSDFFIKDATLPIDDGISLTATVDILRAIASGAGPKHAILALGYAGWAPGQLETEIQDNGWLHCDADADLVFGNDIEEKYDRALHKLGIEPGMLSAEAGHA</sequence>
<protein>
    <recommendedName>
        <fullName evidence="1">UPF0301 protein RPB_4502</fullName>
    </recommendedName>
</protein>
<proteinExistence type="inferred from homology"/>
<dbReference type="EMBL" id="CP000250">
    <property type="protein sequence ID" value="ABD09185.1"/>
    <property type="molecule type" value="Genomic_DNA"/>
</dbReference>
<dbReference type="RefSeq" id="WP_011443368.1">
    <property type="nucleotide sequence ID" value="NC_007778.1"/>
</dbReference>
<dbReference type="SMR" id="Q2IRH5"/>
<dbReference type="STRING" id="316058.RPB_4502"/>
<dbReference type="KEGG" id="rpb:RPB_4502"/>
<dbReference type="eggNOG" id="COG1678">
    <property type="taxonomic scope" value="Bacteria"/>
</dbReference>
<dbReference type="HOGENOM" id="CLU_057596_1_0_5"/>
<dbReference type="OrthoDB" id="9807486at2"/>
<dbReference type="Proteomes" id="UP000008809">
    <property type="component" value="Chromosome"/>
</dbReference>
<dbReference type="GO" id="GO:0005829">
    <property type="term" value="C:cytosol"/>
    <property type="evidence" value="ECO:0007669"/>
    <property type="project" value="TreeGrafter"/>
</dbReference>
<dbReference type="Gene3D" id="3.40.1740.10">
    <property type="entry name" value="VC0467-like"/>
    <property type="match status" value="1"/>
</dbReference>
<dbReference type="HAMAP" id="MF_00758">
    <property type="entry name" value="UPF0301"/>
    <property type="match status" value="1"/>
</dbReference>
<dbReference type="InterPro" id="IPR003774">
    <property type="entry name" value="AlgH-like"/>
</dbReference>
<dbReference type="NCBIfam" id="NF001268">
    <property type="entry name" value="PRK00228.1-4"/>
    <property type="match status" value="1"/>
</dbReference>
<dbReference type="PANTHER" id="PTHR30327">
    <property type="entry name" value="UNCHARACTERIZED PROTEIN YQGE"/>
    <property type="match status" value="1"/>
</dbReference>
<dbReference type="PANTHER" id="PTHR30327:SF1">
    <property type="entry name" value="UPF0301 PROTEIN YQGE"/>
    <property type="match status" value="1"/>
</dbReference>
<dbReference type="Pfam" id="PF02622">
    <property type="entry name" value="DUF179"/>
    <property type="match status" value="1"/>
</dbReference>
<dbReference type="SUPFAM" id="SSF143456">
    <property type="entry name" value="VC0467-like"/>
    <property type="match status" value="1"/>
</dbReference>
<accession>Q2IRH5</accession>
<reference key="1">
    <citation type="submission" date="2006-01" db="EMBL/GenBank/DDBJ databases">
        <title>Complete sequence of Rhodopseudomonas palustris HaA2.</title>
        <authorList>
            <consortium name="US DOE Joint Genome Institute"/>
            <person name="Copeland A."/>
            <person name="Lucas S."/>
            <person name="Lapidus A."/>
            <person name="Barry K."/>
            <person name="Detter J.C."/>
            <person name="Glavina T."/>
            <person name="Hammon N."/>
            <person name="Israni S."/>
            <person name="Pitluck S."/>
            <person name="Chain P."/>
            <person name="Malfatti S."/>
            <person name="Shin M."/>
            <person name="Vergez L."/>
            <person name="Schmutz J."/>
            <person name="Larimer F."/>
            <person name="Land M."/>
            <person name="Hauser L."/>
            <person name="Pelletier D.A."/>
            <person name="Kyrpides N."/>
            <person name="Anderson I."/>
            <person name="Oda Y."/>
            <person name="Harwood C.S."/>
            <person name="Richardson P."/>
        </authorList>
    </citation>
    <scope>NUCLEOTIDE SEQUENCE [LARGE SCALE GENOMIC DNA]</scope>
    <source>
        <strain>HaA2</strain>
    </source>
</reference>
<evidence type="ECO:0000255" key="1">
    <source>
        <dbReference type="HAMAP-Rule" id="MF_00758"/>
    </source>
</evidence>
<evidence type="ECO:0000256" key="2">
    <source>
        <dbReference type="SAM" id="MobiDB-lite"/>
    </source>
</evidence>
<keyword id="KW-1185">Reference proteome</keyword>
<comment type="similarity">
    <text evidence="1">Belongs to the UPF0301 (AlgH) family.</text>
</comment>
<feature type="chain" id="PRO_0000258871" description="UPF0301 protein RPB_4502">
    <location>
        <begin position="1"/>
        <end position="218"/>
    </location>
</feature>
<feature type="region of interest" description="Disordered" evidence="2">
    <location>
        <begin position="1"/>
        <end position="26"/>
    </location>
</feature>
<gene>
    <name type="ordered locus">RPB_4502</name>
</gene>
<organism>
    <name type="scientific">Rhodopseudomonas palustris (strain HaA2)</name>
    <dbReference type="NCBI Taxonomy" id="316058"/>
    <lineage>
        <taxon>Bacteria</taxon>
        <taxon>Pseudomonadati</taxon>
        <taxon>Pseudomonadota</taxon>
        <taxon>Alphaproteobacteria</taxon>
        <taxon>Hyphomicrobiales</taxon>
        <taxon>Nitrobacteraceae</taxon>
        <taxon>Rhodopseudomonas</taxon>
    </lineage>
</organism>
<name>Y4502_RHOP2</name>